<accession>B0VKB4</accession>
<reference key="1">
    <citation type="journal article" date="2008" name="PLoS ONE">
        <title>Comparative analysis of Acinetobacters: three genomes for three lifestyles.</title>
        <authorList>
            <person name="Vallenet D."/>
            <person name="Nordmann P."/>
            <person name="Barbe V."/>
            <person name="Poirel L."/>
            <person name="Mangenot S."/>
            <person name="Bataille E."/>
            <person name="Dossat C."/>
            <person name="Gas S."/>
            <person name="Kreimeyer A."/>
            <person name="Lenoble P."/>
            <person name="Oztas S."/>
            <person name="Poulain J."/>
            <person name="Segurens B."/>
            <person name="Robert C."/>
            <person name="Abergel C."/>
            <person name="Claverie J.-M."/>
            <person name="Raoult D."/>
            <person name="Medigue C."/>
            <person name="Weissenbach J."/>
            <person name="Cruveiller S."/>
        </authorList>
    </citation>
    <scope>NUCLEOTIDE SEQUENCE [LARGE SCALE GENOMIC DNA]</scope>
    <source>
        <strain>SDF</strain>
    </source>
</reference>
<proteinExistence type="inferred from homology"/>
<name>GPDA_ACIBS</name>
<comment type="function">
    <text evidence="1">Catalyzes the reduction of the glycolytic intermediate dihydroxyacetone phosphate (DHAP) to sn-glycerol 3-phosphate (G3P), the key precursor for phospholipid synthesis.</text>
</comment>
<comment type="catalytic activity">
    <reaction evidence="1">
        <text>sn-glycerol 3-phosphate + NAD(+) = dihydroxyacetone phosphate + NADH + H(+)</text>
        <dbReference type="Rhea" id="RHEA:11092"/>
        <dbReference type="ChEBI" id="CHEBI:15378"/>
        <dbReference type="ChEBI" id="CHEBI:57540"/>
        <dbReference type="ChEBI" id="CHEBI:57597"/>
        <dbReference type="ChEBI" id="CHEBI:57642"/>
        <dbReference type="ChEBI" id="CHEBI:57945"/>
        <dbReference type="EC" id="1.1.1.94"/>
    </reaction>
    <physiologicalReaction direction="right-to-left" evidence="1">
        <dbReference type="Rhea" id="RHEA:11094"/>
    </physiologicalReaction>
</comment>
<comment type="catalytic activity">
    <reaction evidence="1">
        <text>sn-glycerol 3-phosphate + NADP(+) = dihydroxyacetone phosphate + NADPH + H(+)</text>
        <dbReference type="Rhea" id="RHEA:11096"/>
        <dbReference type="ChEBI" id="CHEBI:15378"/>
        <dbReference type="ChEBI" id="CHEBI:57597"/>
        <dbReference type="ChEBI" id="CHEBI:57642"/>
        <dbReference type="ChEBI" id="CHEBI:57783"/>
        <dbReference type="ChEBI" id="CHEBI:58349"/>
        <dbReference type="EC" id="1.1.1.94"/>
    </reaction>
    <physiologicalReaction direction="right-to-left" evidence="1">
        <dbReference type="Rhea" id="RHEA:11098"/>
    </physiologicalReaction>
</comment>
<comment type="pathway">
    <text evidence="1">Membrane lipid metabolism; glycerophospholipid metabolism.</text>
</comment>
<comment type="subcellular location">
    <subcellularLocation>
        <location evidence="1">Cytoplasm</location>
    </subcellularLocation>
</comment>
<comment type="similarity">
    <text evidence="1">Belongs to the NAD-dependent glycerol-3-phosphate dehydrogenase family.</text>
</comment>
<evidence type="ECO:0000255" key="1">
    <source>
        <dbReference type="HAMAP-Rule" id="MF_00394"/>
    </source>
</evidence>
<sequence length="357" mass="38550">MAEFKFTDLVEPVAVDKKTALRITVLGGGSFGTAMANLAARNGCDTMIWIRDAETAEEINKTHINKRYLPDFTLESSLRAVSDLEQAVCDRDIILVAIPSHSFRDVLKQIAPYITAQAVVSLTKGIEAKTFSFMSDIIREELPEVPYGVLSGPNLAKEIMAGMPSGTVIASDSELVRYAVQHALHSALFRVFGSDDVHGVELGGALKNIYAVAMGIGAAYKIGENTKSMILTRALAEMSRFAVKQGANPLTFLGLSGVGDLFATCNSPLSRNYQIGYALGSGKTLEQASKELGQTAEGINTIVQVRGKAQELDVYMPITNALYEVIFEGAPPLNIALSLMKNGHRSDVEFVLPHHEV</sequence>
<organism>
    <name type="scientific">Acinetobacter baumannii (strain SDF)</name>
    <dbReference type="NCBI Taxonomy" id="509170"/>
    <lineage>
        <taxon>Bacteria</taxon>
        <taxon>Pseudomonadati</taxon>
        <taxon>Pseudomonadota</taxon>
        <taxon>Gammaproteobacteria</taxon>
        <taxon>Moraxellales</taxon>
        <taxon>Moraxellaceae</taxon>
        <taxon>Acinetobacter</taxon>
        <taxon>Acinetobacter calcoaceticus/baumannii complex</taxon>
    </lineage>
</organism>
<feature type="chain" id="PRO_1000123108" description="Glycerol-3-phosphate dehydrogenase [NAD(P)+]">
    <location>
        <begin position="1"/>
        <end position="357"/>
    </location>
</feature>
<feature type="active site" description="Proton acceptor" evidence="1">
    <location>
        <position position="207"/>
    </location>
</feature>
<feature type="binding site" evidence="1">
    <location>
        <position position="30"/>
    </location>
    <ligand>
        <name>NADPH</name>
        <dbReference type="ChEBI" id="CHEBI:57783"/>
    </ligand>
</feature>
<feature type="binding site" evidence="1">
    <location>
        <position position="31"/>
    </location>
    <ligand>
        <name>NADPH</name>
        <dbReference type="ChEBI" id="CHEBI:57783"/>
    </ligand>
</feature>
<feature type="binding site" evidence="1">
    <location>
        <position position="51"/>
    </location>
    <ligand>
        <name>NADPH</name>
        <dbReference type="ChEBI" id="CHEBI:57783"/>
    </ligand>
</feature>
<feature type="binding site" evidence="1">
    <location>
        <position position="124"/>
    </location>
    <ligand>
        <name>NADPH</name>
        <dbReference type="ChEBI" id="CHEBI:57783"/>
    </ligand>
</feature>
<feature type="binding site" evidence="1">
    <location>
        <position position="124"/>
    </location>
    <ligand>
        <name>sn-glycerol 3-phosphate</name>
        <dbReference type="ChEBI" id="CHEBI:57597"/>
    </ligand>
</feature>
<feature type="binding site" evidence="1">
    <location>
        <position position="152"/>
    </location>
    <ligand>
        <name>sn-glycerol 3-phosphate</name>
        <dbReference type="ChEBI" id="CHEBI:57597"/>
    </ligand>
</feature>
<feature type="binding site" evidence="1">
    <location>
        <position position="156"/>
    </location>
    <ligand>
        <name>NADPH</name>
        <dbReference type="ChEBI" id="CHEBI:57783"/>
    </ligand>
</feature>
<feature type="binding site" evidence="1">
    <location>
        <position position="207"/>
    </location>
    <ligand>
        <name>sn-glycerol 3-phosphate</name>
        <dbReference type="ChEBI" id="CHEBI:57597"/>
    </ligand>
</feature>
<feature type="binding site" evidence="1">
    <location>
        <position position="260"/>
    </location>
    <ligand>
        <name>sn-glycerol 3-phosphate</name>
        <dbReference type="ChEBI" id="CHEBI:57597"/>
    </ligand>
</feature>
<feature type="binding site" evidence="1">
    <location>
        <position position="270"/>
    </location>
    <ligand>
        <name>sn-glycerol 3-phosphate</name>
        <dbReference type="ChEBI" id="CHEBI:57597"/>
    </ligand>
</feature>
<feature type="binding site" evidence="1">
    <location>
        <position position="271"/>
    </location>
    <ligand>
        <name>NADPH</name>
        <dbReference type="ChEBI" id="CHEBI:57783"/>
    </ligand>
</feature>
<feature type="binding site" evidence="1">
    <location>
        <position position="271"/>
    </location>
    <ligand>
        <name>sn-glycerol 3-phosphate</name>
        <dbReference type="ChEBI" id="CHEBI:57597"/>
    </ligand>
</feature>
<feature type="binding site" evidence="1">
    <location>
        <position position="272"/>
    </location>
    <ligand>
        <name>sn-glycerol 3-phosphate</name>
        <dbReference type="ChEBI" id="CHEBI:57597"/>
    </ligand>
</feature>
<feature type="binding site" evidence="1">
    <location>
        <position position="297"/>
    </location>
    <ligand>
        <name>NADPH</name>
        <dbReference type="ChEBI" id="CHEBI:57783"/>
    </ligand>
</feature>
<keyword id="KW-0963">Cytoplasm</keyword>
<keyword id="KW-0444">Lipid biosynthesis</keyword>
<keyword id="KW-0443">Lipid metabolism</keyword>
<keyword id="KW-0520">NAD</keyword>
<keyword id="KW-0521">NADP</keyword>
<keyword id="KW-0547">Nucleotide-binding</keyword>
<keyword id="KW-0560">Oxidoreductase</keyword>
<keyword id="KW-0594">Phospholipid biosynthesis</keyword>
<keyword id="KW-1208">Phospholipid metabolism</keyword>
<gene>
    <name evidence="1" type="primary">gpsA</name>
    <name type="ordered locus">ABSDF1271</name>
</gene>
<protein>
    <recommendedName>
        <fullName evidence="1">Glycerol-3-phosphate dehydrogenase [NAD(P)+]</fullName>
        <ecNumber evidence="1">1.1.1.94</ecNumber>
    </recommendedName>
    <alternativeName>
        <fullName evidence="1">NAD(P)(+)-dependent glycerol-3-phosphate dehydrogenase</fullName>
    </alternativeName>
    <alternativeName>
        <fullName evidence="1">NAD(P)H-dependent dihydroxyacetone-phosphate reductase</fullName>
    </alternativeName>
</protein>
<dbReference type="EC" id="1.1.1.94" evidence="1"/>
<dbReference type="EMBL" id="CU468230">
    <property type="protein sequence ID" value="CAP00617.1"/>
    <property type="molecule type" value="Genomic_DNA"/>
</dbReference>
<dbReference type="SMR" id="B0VKB4"/>
<dbReference type="KEGG" id="abm:ABSDF1271"/>
<dbReference type="HOGENOM" id="CLU_033449_0_2_6"/>
<dbReference type="UniPathway" id="UPA00940"/>
<dbReference type="Proteomes" id="UP000001741">
    <property type="component" value="Chromosome"/>
</dbReference>
<dbReference type="GO" id="GO:0005829">
    <property type="term" value="C:cytosol"/>
    <property type="evidence" value="ECO:0007669"/>
    <property type="project" value="TreeGrafter"/>
</dbReference>
<dbReference type="GO" id="GO:0047952">
    <property type="term" value="F:glycerol-3-phosphate dehydrogenase [NAD(P)+] activity"/>
    <property type="evidence" value="ECO:0007669"/>
    <property type="project" value="UniProtKB-UniRule"/>
</dbReference>
<dbReference type="GO" id="GO:0051287">
    <property type="term" value="F:NAD binding"/>
    <property type="evidence" value="ECO:0007669"/>
    <property type="project" value="InterPro"/>
</dbReference>
<dbReference type="GO" id="GO:0005975">
    <property type="term" value="P:carbohydrate metabolic process"/>
    <property type="evidence" value="ECO:0007669"/>
    <property type="project" value="InterPro"/>
</dbReference>
<dbReference type="GO" id="GO:0046167">
    <property type="term" value="P:glycerol-3-phosphate biosynthetic process"/>
    <property type="evidence" value="ECO:0007669"/>
    <property type="project" value="UniProtKB-UniRule"/>
</dbReference>
<dbReference type="GO" id="GO:0046168">
    <property type="term" value="P:glycerol-3-phosphate catabolic process"/>
    <property type="evidence" value="ECO:0007669"/>
    <property type="project" value="InterPro"/>
</dbReference>
<dbReference type="GO" id="GO:0046474">
    <property type="term" value="P:glycerophospholipid biosynthetic process"/>
    <property type="evidence" value="ECO:0007669"/>
    <property type="project" value="TreeGrafter"/>
</dbReference>
<dbReference type="FunFam" id="1.10.1040.10:FF:000001">
    <property type="entry name" value="Glycerol-3-phosphate dehydrogenase [NAD(P)+]"/>
    <property type="match status" value="1"/>
</dbReference>
<dbReference type="FunFam" id="3.40.50.720:FF:000019">
    <property type="entry name" value="Glycerol-3-phosphate dehydrogenase [NAD(P)+]"/>
    <property type="match status" value="1"/>
</dbReference>
<dbReference type="Gene3D" id="1.10.1040.10">
    <property type="entry name" value="N-(1-d-carboxylethyl)-l-norvaline Dehydrogenase, domain 2"/>
    <property type="match status" value="1"/>
</dbReference>
<dbReference type="Gene3D" id="3.40.50.720">
    <property type="entry name" value="NAD(P)-binding Rossmann-like Domain"/>
    <property type="match status" value="1"/>
</dbReference>
<dbReference type="HAMAP" id="MF_00394">
    <property type="entry name" value="NAD_Glyc3P_dehydrog"/>
    <property type="match status" value="1"/>
</dbReference>
<dbReference type="InterPro" id="IPR008927">
    <property type="entry name" value="6-PGluconate_DH-like_C_sf"/>
</dbReference>
<dbReference type="InterPro" id="IPR013328">
    <property type="entry name" value="6PGD_dom2"/>
</dbReference>
<dbReference type="InterPro" id="IPR006168">
    <property type="entry name" value="G3P_DH_NAD-dep"/>
</dbReference>
<dbReference type="InterPro" id="IPR006109">
    <property type="entry name" value="G3P_DH_NAD-dep_C"/>
</dbReference>
<dbReference type="InterPro" id="IPR011128">
    <property type="entry name" value="G3P_DH_NAD-dep_N"/>
</dbReference>
<dbReference type="InterPro" id="IPR036291">
    <property type="entry name" value="NAD(P)-bd_dom_sf"/>
</dbReference>
<dbReference type="NCBIfam" id="NF000940">
    <property type="entry name" value="PRK00094.1-2"/>
    <property type="match status" value="1"/>
</dbReference>
<dbReference type="NCBIfam" id="NF000942">
    <property type="entry name" value="PRK00094.1-4"/>
    <property type="match status" value="1"/>
</dbReference>
<dbReference type="NCBIfam" id="NF000944">
    <property type="entry name" value="PRK00094.2-2"/>
    <property type="match status" value="1"/>
</dbReference>
<dbReference type="NCBIfam" id="NF000946">
    <property type="entry name" value="PRK00094.2-4"/>
    <property type="match status" value="1"/>
</dbReference>
<dbReference type="PANTHER" id="PTHR11728">
    <property type="entry name" value="GLYCEROL-3-PHOSPHATE DEHYDROGENASE"/>
    <property type="match status" value="1"/>
</dbReference>
<dbReference type="PANTHER" id="PTHR11728:SF1">
    <property type="entry name" value="GLYCEROL-3-PHOSPHATE DEHYDROGENASE [NAD(+)] 2, CHLOROPLASTIC"/>
    <property type="match status" value="1"/>
</dbReference>
<dbReference type="Pfam" id="PF07479">
    <property type="entry name" value="NAD_Gly3P_dh_C"/>
    <property type="match status" value="1"/>
</dbReference>
<dbReference type="Pfam" id="PF01210">
    <property type="entry name" value="NAD_Gly3P_dh_N"/>
    <property type="match status" value="1"/>
</dbReference>
<dbReference type="PIRSF" id="PIRSF000114">
    <property type="entry name" value="Glycerol-3-P_dh"/>
    <property type="match status" value="1"/>
</dbReference>
<dbReference type="PRINTS" id="PR00077">
    <property type="entry name" value="GPDHDRGNASE"/>
</dbReference>
<dbReference type="SUPFAM" id="SSF48179">
    <property type="entry name" value="6-phosphogluconate dehydrogenase C-terminal domain-like"/>
    <property type="match status" value="1"/>
</dbReference>
<dbReference type="SUPFAM" id="SSF51735">
    <property type="entry name" value="NAD(P)-binding Rossmann-fold domains"/>
    <property type="match status" value="1"/>
</dbReference>
<dbReference type="PROSITE" id="PS00957">
    <property type="entry name" value="NAD_G3PDH"/>
    <property type="match status" value="1"/>
</dbReference>